<protein>
    <recommendedName>
        <fullName evidence="12">Palmitoyltransferase ZDHHC1</fullName>
        <ecNumber evidence="9">2.3.1.225</ecNumber>
    </recommendedName>
    <alternativeName>
        <fullName evidence="10">DHHC domain-containing cysteine-rich protein 1</fullName>
    </alternativeName>
    <alternativeName>
        <fullName evidence="14">Zinc finger DHHC domain-containing protein 1</fullName>
        <shortName evidence="10">DHHC-1</shortName>
    </alternativeName>
    <alternativeName>
        <fullName>Zinc finger protein 377</fullName>
    </alternativeName>
</protein>
<organism>
    <name type="scientific">Homo sapiens</name>
    <name type="common">Human</name>
    <dbReference type="NCBI Taxonomy" id="9606"/>
    <lineage>
        <taxon>Eukaryota</taxon>
        <taxon>Metazoa</taxon>
        <taxon>Chordata</taxon>
        <taxon>Craniata</taxon>
        <taxon>Vertebrata</taxon>
        <taxon>Euteleostomi</taxon>
        <taxon>Mammalia</taxon>
        <taxon>Eutheria</taxon>
        <taxon>Euarchontoglires</taxon>
        <taxon>Primates</taxon>
        <taxon>Haplorrhini</taxon>
        <taxon>Catarrhini</taxon>
        <taxon>Hominidae</taxon>
        <taxon>Homo</taxon>
    </lineage>
</organism>
<dbReference type="EC" id="2.3.1.225" evidence="9"/>
<dbReference type="EMBL" id="BC021908">
    <property type="protein sequence ID" value="AAH21908.1"/>
    <property type="molecule type" value="mRNA"/>
</dbReference>
<dbReference type="EMBL" id="U90653">
    <property type="protein sequence ID" value="AAB86591.2"/>
    <property type="molecule type" value="mRNA"/>
</dbReference>
<dbReference type="CCDS" id="CCDS10836.1"/>
<dbReference type="RefSeq" id="NP_001310556.1">
    <property type="nucleotide sequence ID" value="NM_001323627.1"/>
</dbReference>
<dbReference type="RefSeq" id="NP_037436.1">
    <property type="nucleotide sequence ID" value="NM_013304.3"/>
</dbReference>
<dbReference type="RefSeq" id="XP_024306013.1">
    <property type="nucleotide sequence ID" value="XM_024450245.2"/>
</dbReference>
<dbReference type="RefSeq" id="XP_054236159.1">
    <property type="nucleotide sequence ID" value="XM_054380184.1"/>
</dbReference>
<dbReference type="BioGRID" id="118924">
    <property type="interactions" value="34"/>
</dbReference>
<dbReference type="FunCoup" id="Q8WTX9">
    <property type="interactions" value="430"/>
</dbReference>
<dbReference type="IntAct" id="Q8WTX9">
    <property type="interactions" value="22"/>
</dbReference>
<dbReference type="STRING" id="9606.ENSP00000340299"/>
<dbReference type="GlyGen" id="Q8WTX9">
    <property type="glycosylation" value="2 sites, 1 O-linked glycan (1 site)"/>
</dbReference>
<dbReference type="iPTMnet" id="Q8WTX9"/>
<dbReference type="PhosphoSitePlus" id="Q8WTX9"/>
<dbReference type="BioMuta" id="ZDHHC1"/>
<dbReference type="DMDM" id="28202100"/>
<dbReference type="MassIVE" id="Q8WTX9"/>
<dbReference type="PaxDb" id="9606-ENSP00000340299"/>
<dbReference type="PeptideAtlas" id="Q8WTX9"/>
<dbReference type="ProteomicsDB" id="74613"/>
<dbReference type="Antibodypedia" id="56070">
    <property type="antibodies" value="137 antibodies from 21 providers"/>
</dbReference>
<dbReference type="DNASU" id="29800"/>
<dbReference type="Ensembl" id="ENST00000348579.6">
    <property type="protein sequence ID" value="ENSP00000340299.2"/>
    <property type="gene ID" value="ENSG00000159714.12"/>
</dbReference>
<dbReference type="GeneID" id="29800"/>
<dbReference type="KEGG" id="hsa:29800"/>
<dbReference type="UCSC" id="uc010vjm.3">
    <property type="organism name" value="human"/>
</dbReference>
<dbReference type="AGR" id="HGNC:17916"/>
<dbReference type="CTD" id="29800"/>
<dbReference type="DisGeNET" id="29800"/>
<dbReference type="GeneCards" id="ZDHHC1"/>
<dbReference type="HGNC" id="HGNC:17916">
    <property type="gene designation" value="ZDHHC1"/>
</dbReference>
<dbReference type="HPA" id="ENSG00000159714">
    <property type="expression patterns" value="Low tissue specificity"/>
</dbReference>
<dbReference type="neXtProt" id="NX_Q8WTX9"/>
<dbReference type="OpenTargets" id="ENSG00000159714"/>
<dbReference type="PharmGKB" id="PA38261"/>
<dbReference type="VEuPathDB" id="HostDB:ENSG00000159714"/>
<dbReference type="eggNOG" id="KOG1311">
    <property type="taxonomic scope" value="Eukaryota"/>
</dbReference>
<dbReference type="GeneTree" id="ENSGT00940000159191"/>
<dbReference type="HOGENOM" id="CLU_020283_0_0_1"/>
<dbReference type="InParanoid" id="Q8WTX9"/>
<dbReference type="OrthoDB" id="9909019at2759"/>
<dbReference type="PAN-GO" id="Q8WTX9">
    <property type="GO annotations" value="5 GO annotations based on evolutionary models"/>
</dbReference>
<dbReference type="PhylomeDB" id="Q8WTX9"/>
<dbReference type="TreeFam" id="TF317498"/>
<dbReference type="PathwayCommons" id="Q8WTX9"/>
<dbReference type="SignaLink" id="Q8WTX9"/>
<dbReference type="BioGRID-ORCS" id="29800">
    <property type="hits" value="9 hits in 1150 CRISPR screens"/>
</dbReference>
<dbReference type="ChiTaRS" id="ZDHHC1">
    <property type="organism name" value="human"/>
</dbReference>
<dbReference type="GenomeRNAi" id="29800"/>
<dbReference type="Pharos" id="Q8WTX9">
    <property type="development level" value="Tdark"/>
</dbReference>
<dbReference type="PRO" id="PR:Q8WTX9"/>
<dbReference type="Proteomes" id="UP000005640">
    <property type="component" value="Chromosome 16"/>
</dbReference>
<dbReference type="RNAct" id="Q8WTX9">
    <property type="molecule type" value="protein"/>
</dbReference>
<dbReference type="Bgee" id="ENSG00000159714">
    <property type="expression patterns" value="Expressed in right uterine tube and 94 other cell types or tissues"/>
</dbReference>
<dbReference type="ExpressionAtlas" id="Q8WTX9">
    <property type="expression patterns" value="baseline and differential"/>
</dbReference>
<dbReference type="GO" id="GO:0005783">
    <property type="term" value="C:endoplasmic reticulum"/>
    <property type="evidence" value="ECO:0000314"/>
    <property type="project" value="UniProtKB"/>
</dbReference>
<dbReference type="GO" id="GO:0005789">
    <property type="term" value="C:endoplasmic reticulum membrane"/>
    <property type="evidence" value="ECO:0000314"/>
    <property type="project" value="UniProtKB"/>
</dbReference>
<dbReference type="GO" id="GO:0010008">
    <property type="term" value="C:endosome membrane"/>
    <property type="evidence" value="ECO:0007669"/>
    <property type="project" value="UniProtKB-SubCell"/>
</dbReference>
<dbReference type="GO" id="GO:0070062">
    <property type="term" value="C:extracellular exosome"/>
    <property type="evidence" value="ECO:0007005"/>
    <property type="project" value="UniProtKB"/>
</dbReference>
<dbReference type="GO" id="GO:0005794">
    <property type="term" value="C:Golgi apparatus"/>
    <property type="evidence" value="ECO:0000314"/>
    <property type="project" value="UniProtKB"/>
</dbReference>
<dbReference type="GO" id="GO:0003677">
    <property type="term" value="F:DNA binding"/>
    <property type="evidence" value="ECO:0000303"/>
    <property type="project" value="UniProtKB"/>
</dbReference>
<dbReference type="GO" id="GO:0016409">
    <property type="term" value="F:palmitoyltransferase activity"/>
    <property type="evidence" value="ECO:0000314"/>
    <property type="project" value="UniProtKB"/>
</dbReference>
<dbReference type="GO" id="GO:0019706">
    <property type="term" value="F:protein-cysteine S-palmitoyltransferase activity"/>
    <property type="evidence" value="ECO:0000314"/>
    <property type="project" value="UniProtKB"/>
</dbReference>
<dbReference type="GO" id="GO:0140374">
    <property type="term" value="P:antiviral innate immune response"/>
    <property type="evidence" value="ECO:0000315"/>
    <property type="project" value="UniProtKB"/>
</dbReference>
<dbReference type="GO" id="GO:0002230">
    <property type="term" value="P:positive regulation of defense response to virus by host"/>
    <property type="evidence" value="ECO:0000315"/>
    <property type="project" value="UniProtKB"/>
</dbReference>
<dbReference type="GO" id="GO:1900227">
    <property type="term" value="P:positive regulation of NLRP3 inflammasome complex assembly"/>
    <property type="evidence" value="ECO:0000314"/>
    <property type="project" value="UniProtKB"/>
</dbReference>
<dbReference type="GO" id="GO:0018345">
    <property type="term" value="P:protein palmitoylation"/>
    <property type="evidence" value="ECO:0000314"/>
    <property type="project" value="UniProtKB"/>
</dbReference>
<dbReference type="GO" id="GO:0006612">
    <property type="term" value="P:protein targeting to membrane"/>
    <property type="evidence" value="ECO:0000318"/>
    <property type="project" value="GO_Central"/>
</dbReference>
<dbReference type="InterPro" id="IPR001594">
    <property type="entry name" value="Palmitoyltrfase_DHHC"/>
</dbReference>
<dbReference type="InterPro" id="IPR039859">
    <property type="entry name" value="PFA4/ZDH16/20/ERF2-like"/>
</dbReference>
<dbReference type="PANTHER" id="PTHR22883:SF8">
    <property type="entry name" value="PALMITOYLTRANSFERASE ZDHHC1"/>
    <property type="match status" value="1"/>
</dbReference>
<dbReference type="PANTHER" id="PTHR22883">
    <property type="entry name" value="ZINC FINGER DHHC DOMAIN CONTAINING PROTEIN"/>
    <property type="match status" value="1"/>
</dbReference>
<dbReference type="Pfam" id="PF01529">
    <property type="entry name" value="DHHC"/>
    <property type="match status" value="1"/>
</dbReference>
<dbReference type="PROSITE" id="PS50216">
    <property type="entry name" value="DHHC"/>
    <property type="match status" value="1"/>
</dbReference>
<evidence type="ECO:0000250" key="1">
    <source>
        <dbReference type="UniProtKB" id="Q8IUH5"/>
    </source>
</evidence>
<evidence type="ECO:0000250" key="2">
    <source>
        <dbReference type="UniProtKB" id="Q8R0N9"/>
    </source>
</evidence>
<evidence type="ECO:0000255" key="3"/>
<evidence type="ECO:0000255" key="4">
    <source>
        <dbReference type="PROSITE-ProRule" id="PRU00067"/>
    </source>
</evidence>
<evidence type="ECO:0000256" key="5">
    <source>
        <dbReference type="SAM" id="MobiDB-lite"/>
    </source>
</evidence>
<evidence type="ECO:0000269" key="6">
    <source>
    </source>
</evidence>
<evidence type="ECO:0000269" key="7">
    <source>
    </source>
</evidence>
<evidence type="ECO:0000269" key="8">
    <source>
    </source>
</evidence>
<evidence type="ECO:0000269" key="9">
    <source>
    </source>
</evidence>
<evidence type="ECO:0000303" key="10">
    <source>
    </source>
</evidence>
<evidence type="ECO:0000303" key="11">
    <source>
    </source>
</evidence>
<evidence type="ECO:0000305" key="12"/>
<evidence type="ECO:0000305" key="13">
    <source>
    </source>
</evidence>
<evidence type="ECO:0000312" key="14">
    <source>
        <dbReference type="HGNC" id="HGNC:17916"/>
    </source>
</evidence>
<reference key="1">
    <citation type="journal article" date="2004" name="Genome Res.">
        <title>The status, quality, and expansion of the NIH full-length cDNA project: the Mammalian Gene Collection (MGC).</title>
        <authorList>
            <consortium name="The MGC Project Team"/>
        </authorList>
    </citation>
    <scope>NUCLEOTIDE SEQUENCE [LARGE SCALE MRNA]</scope>
    <source>
        <tissue>Uterus</tissue>
    </source>
</reference>
<reference key="2">
    <citation type="journal article" date="1999" name="Mol. Cell. Biochem.">
        <title>The DHHC domain: a new highly conserved cysteine-rich motif.</title>
        <authorList>
            <person name="Putilina T."/>
            <person name="Wong P."/>
            <person name="Gentleman S."/>
        </authorList>
    </citation>
    <scope>NUCLEOTIDE SEQUENCE [MRNA] OF 1-293</scope>
    <scope>TISSUE SPECIFICITY</scope>
    <scope>DEVELOPMENTAL STAGE</scope>
    <source>
        <tissue>Pancreas</tissue>
    </source>
</reference>
<reference key="3">
    <citation type="journal article" date="2006" name="Biochim. Biophys. Acta">
        <title>Intracellular localization and tissue-specific distribution of human and yeast DHHC cysteine-rich domain-containing proteins.</title>
        <authorList>
            <person name="Ohno Y."/>
            <person name="Kihara A."/>
            <person name="Sano T."/>
            <person name="Igarashi Y."/>
        </authorList>
    </citation>
    <scope>SUBCELLULAR LOCATION</scope>
    <scope>TISSUE SPECIFICITY</scope>
</reference>
<reference key="4">
    <citation type="journal article" date="2014" name="Cell Host Microbe">
        <title>The ER-associated protein ZDHHC1 is a positive regulator of DNA virus-triggered, MITA/STING-dependent innate immune signaling.</title>
        <authorList>
            <person name="Zhou Q."/>
            <person name="Lin H."/>
            <person name="Wang S."/>
            <person name="Wang S."/>
            <person name="Ran Y."/>
            <person name="Liu Y."/>
            <person name="Ye W."/>
            <person name="Xiong X."/>
            <person name="Zhong B."/>
            <person name="Shu H.B."/>
            <person name="Wang Y.Y."/>
        </authorList>
    </citation>
    <scope>FUNCTION</scope>
    <scope>INTERACTION WITH STING1</scope>
    <scope>SUBCELLULAR LOCATION</scope>
    <scope>REGION</scope>
</reference>
<reference key="5">
    <citation type="journal article" date="2024" name="Mol. Cell">
        <title>Consecutive palmitoylation and phosphorylation orchestrates NLRP3 membrane trafficking and inflammasome activation.</title>
        <authorList>
            <person name="Nie L."/>
            <person name="Fei C."/>
            <person name="Fan Y."/>
            <person name="Dang F."/>
            <person name="Zhao Z."/>
            <person name="Zhu T."/>
            <person name="Wu X."/>
            <person name="Dai T."/>
            <person name="Balasubramanian A."/>
            <person name="Pan J."/>
            <person name="Hu Y."/>
            <person name="Luo H.R."/>
            <person name="Wei W."/>
            <person name="Chen J."/>
        </authorList>
    </citation>
    <scope>FUNCTION</scope>
    <scope>CATALYTIC ACTIVITY</scope>
</reference>
<accession>Q8WTX9</accession>
<accession>O15461</accession>
<sequence>MYKMNICNKPSNKTAPEKSVWTAPAQPSGPSPELQGQRSRRNGWSWPPHPLQIVAWLLYLFFAVIGFGILVPLLPHHWVPAGYACMGAIFAGHLVVHLTAVSIDPADANVRDKSYAGPLPIFNRSQHAHVIEDLHCNLCNVDVSARSKHCSACNKCVCGFDHHCKWLNNCVGERNYRLFLHSVASALLGVLLLVLVATYVFVEFFVNPMRLRTNRHFEVLKNHTDVWFVFLPAAPVETQAPAILALAALLILLGLLSTALLGHLLCFHIYLMWHKLTTYEYIVQHRPPQEAKGVHRELESCPPKMRPIQEMEFYMRTFRHMRPEPPGQAGPAAVNAKHSRPASPDPTPGRRDCAGPPVQVEWDRKKPLPWRSPLLLLAMWGPQAPPCLCRKRGRGACIKCERLRPRIRRRGLGPPAAAPARRRIPRTPALCTPLALPAPTTRRRQSPWTRFQWRRRAWAAPLWPPRGAGADSPRWRGRRVRPPFS</sequence>
<proteinExistence type="evidence at protein level"/>
<name>ZDHC1_HUMAN</name>
<comment type="function">
    <text evidence="2 9">Palmitoyltransferase that catalyzes the addition of palmitate onto various protein substrates, such as NCDN and NLRP3 (PubMed:39173637). Has a palmitoyltransferase activity toward NCDN and regulates NCDN association with endosome membranes through this palmitoylation (By similarity). Acts as an activator of the NLRP3 inflammasome by mediating palmitoylation of 'Cys-130' and 'Cys-958' of NLRP3, thereby promoting NLRP3 phosphorylation and activation by NEK7 (PubMed:39173637).</text>
</comment>
<comment type="function">
    <text evidence="8">Also has a palmitoyltransferase activity-independent function in DNA virus-triggered and CGAS-mediated innate immune response (PubMed:25299331). Functions as an activator of STING1 by promoting its cGAMP-induced oligomerization and the recruitment of downstream signaling components (PubMed:25299331).</text>
</comment>
<comment type="catalytic activity">
    <reaction evidence="9">
        <text>L-cysteinyl-[protein] + hexadecanoyl-CoA = S-hexadecanoyl-L-cysteinyl-[protein] + CoA</text>
        <dbReference type="Rhea" id="RHEA:36683"/>
        <dbReference type="Rhea" id="RHEA-COMP:10131"/>
        <dbReference type="Rhea" id="RHEA-COMP:11032"/>
        <dbReference type="ChEBI" id="CHEBI:29950"/>
        <dbReference type="ChEBI" id="CHEBI:57287"/>
        <dbReference type="ChEBI" id="CHEBI:57379"/>
        <dbReference type="ChEBI" id="CHEBI:74151"/>
        <dbReference type="EC" id="2.3.1.225"/>
    </reaction>
    <physiologicalReaction direction="left-to-right" evidence="13">
        <dbReference type="Rhea" id="RHEA:36684"/>
    </physiologicalReaction>
</comment>
<comment type="subunit">
    <text evidence="8">Interacts with STING1; ZDHHC1 constitutively interacts with STING1 and in presence of DNA viruses activates it by promoting its cGAMP-induced oligomerization and the recruitment of downstream signaling components.</text>
</comment>
<comment type="interaction">
    <interactant intactId="EBI-2818796">
        <id>Q8WTX9</id>
    </interactant>
    <interactant intactId="EBI-3867333">
        <id>A8MQ03</id>
        <label>CYSRT1</label>
    </interactant>
    <organismsDiffer>false</organismsDiffer>
    <experiments>3</experiments>
</comment>
<comment type="interaction">
    <interactant intactId="EBI-2818796">
        <id>Q8WTX9</id>
    </interactant>
    <interactant intactId="EBI-11102276">
        <id>Q9HD26-2</id>
        <label>GOPC</label>
    </interactant>
    <organismsDiffer>false</organismsDiffer>
    <experiments>3</experiments>
</comment>
<comment type="interaction">
    <interactant intactId="EBI-2818796">
        <id>Q8WTX9</id>
    </interactant>
    <interactant intactId="EBI-948001">
        <id>Q15323</id>
        <label>KRT31</label>
    </interactant>
    <organismsDiffer>false</organismsDiffer>
    <experiments>3</experiments>
</comment>
<comment type="interaction">
    <interactant intactId="EBI-2818796">
        <id>Q8WTX9</id>
    </interactant>
    <interactant intactId="EBI-1047093">
        <id>O76011</id>
        <label>KRT34</label>
    </interactant>
    <organismsDiffer>false</organismsDiffer>
    <experiments>3</experiments>
</comment>
<comment type="interaction">
    <interactant intactId="EBI-2818796">
        <id>Q8WTX9</id>
    </interactant>
    <interactant intactId="EBI-10221390">
        <id>P78385</id>
        <label>KRT83</label>
    </interactant>
    <organismsDiffer>false</organismsDiffer>
    <experiments>3</experiments>
</comment>
<comment type="interaction">
    <interactant intactId="EBI-2818796">
        <id>Q8WTX9</id>
    </interactant>
    <interactant intactId="EBI-11959885">
        <id>Q07627</id>
        <label>KRTAP1-1</label>
    </interactant>
    <organismsDiffer>false</organismsDiffer>
    <experiments>3</experiments>
</comment>
<comment type="interaction">
    <interactant intactId="EBI-2818796">
        <id>Q8WTX9</id>
    </interactant>
    <interactant intactId="EBI-11749135">
        <id>Q8IUG1</id>
        <label>KRTAP1-3</label>
    </interactant>
    <organismsDiffer>false</organismsDiffer>
    <experiments>3</experiments>
</comment>
<comment type="interaction">
    <interactant intactId="EBI-2818796">
        <id>Q8WTX9</id>
    </interactant>
    <interactant intactId="EBI-10171774">
        <id>P60410</id>
        <label>KRTAP10-8</label>
    </interactant>
    <organismsDiffer>false</organismsDiffer>
    <experiments>3</experiments>
</comment>
<comment type="interaction">
    <interactant intactId="EBI-2818796">
        <id>Q8WTX9</id>
    </interactant>
    <interactant intactId="EBI-10176379">
        <id>P59991</id>
        <label>KRTAP12-2</label>
    </interactant>
    <organismsDiffer>false</organismsDiffer>
    <experiments>3</experiments>
</comment>
<comment type="interaction">
    <interactant intactId="EBI-2818796">
        <id>Q8WTX9</id>
    </interactant>
    <interactant intactId="EBI-11953334">
        <id>P60328</id>
        <label>KRTAP12-3</label>
    </interactant>
    <organismsDiffer>false</organismsDiffer>
    <experiments>3</experiments>
</comment>
<comment type="interaction">
    <interactant intactId="EBI-2818796">
        <id>Q8WTX9</id>
    </interactant>
    <interactant intactId="EBI-11988175">
        <id>Q9BYP8</id>
        <label>KRTAP17-1</label>
    </interactant>
    <organismsDiffer>false</organismsDiffer>
    <experiments>3</experiments>
</comment>
<comment type="interaction">
    <interactant intactId="EBI-2818796">
        <id>Q8WTX9</id>
    </interactant>
    <interactant intactId="EBI-14065470">
        <id>Q9BYR9</id>
        <label>KRTAP2-4</label>
    </interactant>
    <organismsDiffer>false</organismsDiffer>
    <experiments>3</experiments>
</comment>
<comment type="interaction">
    <interactant intactId="EBI-2818796">
        <id>Q8WTX9</id>
    </interactant>
    <interactant intactId="EBI-1044640">
        <id>Q9BYQ4</id>
        <label>KRTAP9-2</label>
    </interactant>
    <organismsDiffer>false</organismsDiffer>
    <experiments>3</experiments>
</comment>
<comment type="interaction">
    <interactant intactId="EBI-2818796">
        <id>Q8WTX9</id>
    </interactant>
    <interactant intactId="EBI-724076">
        <id>Q99750</id>
        <label>MDFI</label>
    </interactant>
    <organismsDiffer>false</organismsDiffer>
    <experiments>3</experiments>
</comment>
<comment type="interaction">
    <interactant intactId="EBI-2818796">
        <id>Q8WTX9</id>
    </interactant>
    <interactant intactId="EBI-22310682">
        <id>P0DPK4</id>
        <label>NOTCH2NLC</label>
    </interactant>
    <organismsDiffer>false</organismsDiffer>
    <experiments>3</experiments>
</comment>
<comment type="subcellular location">
    <subcellularLocation>
        <location evidence="2">Endosome membrane</location>
        <topology evidence="3">Multi-pass membrane protein</topology>
    </subcellularLocation>
    <subcellularLocation>
        <location evidence="7 8">Endoplasmic reticulum membrane</location>
        <topology evidence="3">Multi-pass membrane protein</topology>
    </subcellularLocation>
    <subcellularLocation>
        <location evidence="8">Golgi apparatus</location>
    </subcellularLocation>
</comment>
<comment type="tissue specificity">
    <text evidence="6 7">Widely expressed with significant expression in heart, brain, placenta, lung, liver, kidney, testis, thymus and small intestine (PubMed:16647879). Expressed at lower levels in adult pancreas and lung (PubMed:10395086).</text>
</comment>
<comment type="developmental stage">
    <text evidence="6">Expressed at high levels in fetal lung, kidney and heart.</text>
</comment>
<comment type="domain">
    <text evidence="1">The DHHC domain is required for palmitoyltransferase activity.</text>
</comment>
<comment type="similarity">
    <text evidence="12">Belongs to the DHHC palmitoyltransferase family.</text>
</comment>
<feature type="chain" id="PRO_0000212857" description="Palmitoyltransferase ZDHHC1">
    <location>
        <begin position="1"/>
        <end position="485"/>
    </location>
</feature>
<feature type="topological domain" description="Cytoplasmic" evidence="12">
    <location>
        <begin position="1"/>
        <end position="52"/>
    </location>
</feature>
<feature type="transmembrane region" description="Helical" evidence="3">
    <location>
        <begin position="53"/>
        <end position="73"/>
    </location>
</feature>
<feature type="topological domain" description="Lumenal" evidence="12">
    <location>
        <begin position="74"/>
        <end position="77"/>
    </location>
</feature>
<feature type="transmembrane region" description="Helical" evidence="3">
    <location>
        <begin position="78"/>
        <end position="98"/>
    </location>
</feature>
<feature type="topological domain" description="Cytoplasmic" evidence="12">
    <location>
        <begin position="99"/>
        <end position="185"/>
    </location>
</feature>
<feature type="transmembrane region" description="Helical" evidence="3">
    <location>
        <begin position="186"/>
        <end position="206"/>
    </location>
</feature>
<feature type="topological domain" description="Lumenal" evidence="12">
    <location>
        <begin position="207"/>
        <end position="241"/>
    </location>
</feature>
<feature type="transmembrane region" description="Helical" evidence="3">
    <location>
        <begin position="242"/>
        <end position="262"/>
    </location>
</feature>
<feature type="topological domain" description="Cytoplasmic" evidence="12">
    <location>
        <begin position="263"/>
        <end position="485"/>
    </location>
</feature>
<feature type="domain" description="DHHC" evidence="4">
    <location>
        <begin position="134"/>
        <end position="184"/>
    </location>
</feature>
<feature type="region of interest" description="Mediates interaction with STING1" evidence="8">
    <location>
        <begin position="1"/>
        <end position="271"/>
    </location>
</feature>
<feature type="region of interest" description="Disordered" evidence="5">
    <location>
        <begin position="1"/>
        <end position="41"/>
    </location>
</feature>
<feature type="region of interest" description="Disordered" evidence="5">
    <location>
        <begin position="324"/>
        <end position="358"/>
    </location>
</feature>
<feature type="region of interest" description="Disordered" evidence="5">
    <location>
        <begin position="462"/>
        <end position="485"/>
    </location>
</feature>
<feature type="compositionally biased region" description="Basic residues" evidence="5">
    <location>
        <begin position="475"/>
        <end position="485"/>
    </location>
</feature>
<feature type="active site" description="S-palmitoyl cysteine intermediate" evidence="4">
    <location>
        <position position="164"/>
    </location>
</feature>
<feature type="sequence variant" id="VAR_052972" description="In dbSNP:rs34229857.">
    <original>R</original>
    <variation>Q</variation>
    <location>
        <position position="124"/>
    </location>
</feature>
<keyword id="KW-0012">Acyltransferase</keyword>
<keyword id="KW-0256">Endoplasmic reticulum</keyword>
<keyword id="KW-0967">Endosome</keyword>
<keyword id="KW-0333">Golgi apparatus</keyword>
<keyword id="KW-0449">Lipoprotein</keyword>
<keyword id="KW-0472">Membrane</keyword>
<keyword id="KW-0564">Palmitate</keyword>
<keyword id="KW-1267">Proteomics identification</keyword>
<keyword id="KW-1185">Reference proteome</keyword>
<keyword id="KW-0808">Transferase</keyword>
<keyword id="KW-0812">Transmembrane</keyword>
<keyword id="KW-1133">Transmembrane helix</keyword>
<gene>
    <name evidence="11 14" type="primary">ZDHHC1</name>
    <name evidence="14" type="synonym">C16orf1</name>
    <name type="synonym">ZNF377</name>
</gene>